<gene>
    <name type="primary">sdhE</name>
    <name type="ordered locus">VP2582</name>
</gene>
<proteinExistence type="inferred from homology"/>
<reference key="1">
    <citation type="journal article" date="2003" name="Lancet">
        <title>Genome sequence of Vibrio parahaemolyticus: a pathogenic mechanism distinct from that of V. cholerae.</title>
        <authorList>
            <person name="Makino K."/>
            <person name="Oshima K."/>
            <person name="Kurokawa K."/>
            <person name="Yokoyama K."/>
            <person name="Uda T."/>
            <person name="Tagomori K."/>
            <person name="Iijima Y."/>
            <person name="Najima M."/>
            <person name="Nakano M."/>
            <person name="Yamashita A."/>
            <person name="Kubota Y."/>
            <person name="Kimura S."/>
            <person name="Yasunaga T."/>
            <person name="Honda T."/>
            <person name="Shinagawa H."/>
            <person name="Hattori M."/>
            <person name="Iida T."/>
        </authorList>
    </citation>
    <scope>NUCLEOTIDE SEQUENCE [LARGE SCALE GENOMIC DNA]</scope>
    <source>
        <strain>RIMD 2210633</strain>
    </source>
</reference>
<organism>
    <name type="scientific">Vibrio parahaemolyticus serotype O3:K6 (strain RIMD 2210633)</name>
    <dbReference type="NCBI Taxonomy" id="223926"/>
    <lineage>
        <taxon>Bacteria</taxon>
        <taxon>Pseudomonadati</taxon>
        <taxon>Pseudomonadota</taxon>
        <taxon>Gammaproteobacteria</taxon>
        <taxon>Vibrionales</taxon>
        <taxon>Vibrionaceae</taxon>
        <taxon>Vibrio</taxon>
    </lineage>
</organism>
<evidence type="ECO:0000250" key="1">
    <source>
        <dbReference type="UniProtKB" id="G4V4G2"/>
    </source>
</evidence>
<evidence type="ECO:0000305" key="2"/>
<accession>Q87LM9</accession>
<comment type="function">
    <text evidence="1">An FAD assembly protein, which accelerates covalent attachment of the cofactor into other proteins. Plays an essential role in the assembly of succinate dehydrogenase (SDH, respiratory complex II), an enzyme complex that is a component of both the tricarboxylic acid cycle and the electron transport chain, and which couples the oxidation of succinate to fumarate with the reduction of ubiquinone (coenzyme Q) to ubiquinol. Required for flavinylation (covalent attachment of FAD) of the flavoprotein subunit SdhA of SDH and other flavinylated proteins as well.</text>
</comment>
<comment type="subcellular location">
    <subcellularLocation>
        <location evidence="1">Cytoplasm</location>
    </subcellularLocation>
</comment>
<comment type="similarity">
    <text evidence="2">Belongs to the SdhE FAD assembly factor family.</text>
</comment>
<protein>
    <recommendedName>
        <fullName>FAD assembly factor SdhE</fullName>
    </recommendedName>
</protein>
<feature type="chain" id="PRO_0000214427" description="FAD assembly factor SdhE">
    <location>
        <begin position="1"/>
        <end position="86"/>
    </location>
</feature>
<keyword id="KW-0143">Chaperone</keyword>
<keyword id="KW-0963">Cytoplasm</keyword>
<name>SDHE_VIBPA</name>
<sequence length="86" mass="10031">MYTPEEKARIKWACRRGMLELDVVIMPFFEECFDALNEQEQRDFVSLLECDDPDLFTWVMGHGRSENLGHAAMVDKIVAHNLSKVR</sequence>
<dbReference type="EMBL" id="BA000031">
    <property type="protein sequence ID" value="BAC60845.1"/>
    <property type="molecule type" value="Genomic_DNA"/>
</dbReference>
<dbReference type="RefSeq" id="NP_798961.1">
    <property type="nucleotide sequence ID" value="NC_004603.1"/>
</dbReference>
<dbReference type="RefSeq" id="WP_005458651.1">
    <property type="nucleotide sequence ID" value="NC_004603.1"/>
</dbReference>
<dbReference type="SMR" id="Q87LM9"/>
<dbReference type="GeneID" id="1190106"/>
<dbReference type="KEGG" id="vpa:VP2582"/>
<dbReference type="PATRIC" id="fig|223926.6.peg.2479"/>
<dbReference type="eggNOG" id="COG2938">
    <property type="taxonomic scope" value="Bacteria"/>
</dbReference>
<dbReference type="HOGENOM" id="CLU_103054_2_2_6"/>
<dbReference type="Proteomes" id="UP000002493">
    <property type="component" value="Chromosome 1"/>
</dbReference>
<dbReference type="GO" id="GO:0005737">
    <property type="term" value="C:cytoplasm"/>
    <property type="evidence" value="ECO:0007669"/>
    <property type="project" value="UniProtKB-SubCell"/>
</dbReference>
<dbReference type="GO" id="GO:0006105">
    <property type="term" value="P:succinate metabolic process"/>
    <property type="evidence" value="ECO:0007669"/>
    <property type="project" value="TreeGrafter"/>
</dbReference>
<dbReference type="FunFam" id="1.10.150.250:FF:000001">
    <property type="entry name" value="FAD assembly factor SdhE"/>
    <property type="match status" value="1"/>
</dbReference>
<dbReference type="Gene3D" id="1.10.150.250">
    <property type="entry name" value="Flavinator of succinate dehydrogenase"/>
    <property type="match status" value="1"/>
</dbReference>
<dbReference type="InterPro" id="IPR005631">
    <property type="entry name" value="SDH"/>
</dbReference>
<dbReference type="InterPro" id="IPR036714">
    <property type="entry name" value="SDH_sf"/>
</dbReference>
<dbReference type="InterPro" id="IPR050531">
    <property type="entry name" value="SdhE_FAD_assembly_factor"/>
</dbReference>
<dbReference type="PANTHER" id="PTHR39585">
    <property type="entry name" value="FAD ASSEMBLY FACTOR SDHE"/>
    <property type="match status" value="1"/>
</dbReference>
<dbReference type="PANTHER" id="PTHR39585:SF1">
    <property type="entry name" value="FAD ASSEMBLY FACTOR SDHE"/>
    <property type="match status" value="1"/>
</dbReference>
<dbReference type="Pfam" id="PF03937">
    <property type="entry name" value="Sdh5"/>
    <property type="match status" value="1"/>
</dbReference>
<dbReference type="SUPFAM" id="SSF109910">
    <property type="entry name" value="YgfY-like"/>
    <property type="match status" value="1"/>
</dbReference>